<dbReference type="EMBL" id="AABR03100255">
    <property type="status" value="NOT_ANNOTATED_CDS"/>
    <property type="molecule type" value="Genomic_DNA"/>
</dbReference>
<dbReference type="EMBL" id="AABR03101829">
    <property type="status" value="NOT_ANNOTATED_CDS"/>
    <property type="molecule type" value="Genomic_DNA"/>
</dbReference>
<dbReference type="EMBL" id="AABR03101330">
    <property type="status" value="NOT_ANNOTATED_CDS"/>
    <property type="molecule type" value="Genomic_DNA"/>
</dbReference>
<dbReference type="EMBL" id="D26492">
    <property type="protein sequence ID" value="BAA05500.1"/>
    <property type="molecule type" value="mRNA"/>
</dbReference>
<dbReference type="PIR" id="I70171">
    <property type="entry name" value="I70171"/>
</dbReference>
<dbReference type="RefSeq" id="NP_001028827.2">
    <property type="nucleotide sequence ID" value="NM_001033655.2"/>
</dbReference>
<dbReference type="SMR" id="Q63164"/>
<dbReference type="FunCoup" id="Q63164">
    <property type="interactions" value="84"/>
</dbReference>
<dbReference type="STRING" id="10116.ENSRNOP00000032434"/>
<dbReference type="CarbonylDB" id="Q63164"/>
<dbReference type="GlyGen" id="Q63164">
    <property type="glycosylation" value="5 sites"/>
</dbReference>
<dbReference type="iPTMnet" id="Q63164"/>
<dbReference type="PhosphoSitePlus" id="Q63164"/>
<dbReference type="PaxDb" id="10116-ENSRNOP00000059841"/>
<dbReference type="Ensembl" id="ENSRNOT00000035009.7">
    <molecule id="Q63164-1"/>
    <property type="protein sequence ID" value="ENSRNOP00000032434.5"/>
    <property type="gene ID" value="ENSRNOG00000026914.8"/>
</dbReference>
<dbReference type="Ensembl" id="ENSRNOT00000113143.1">
    <molecule id="Q63164-2"/>
    <property type="protein sequence ID" value="ENSRNOP00000076750.1"/>
    <property type="gene ID" value="ENSRNOG00000026914.8"/>
</dbReference>
<dbReference type="GeneID" id="171339"/>
<dbReference type="KEGG" id="rno:171339"/>
<dbReference type="UCSC" id="RGD:621795">
    <molecule id="Q63164-1"/>
    <property type="organism name" value="rat"/>
</dbReference>
<dbReference type="AGR" id="RGD:621795"/>
<dbReference type="CTD" id="25981"/>
<dbReference type="RGD" id="621795">
    <property type="gene designation" value="Dnah1"/>
</dbReference>
<dbReference type="eggNOG" id="KOG3595">
    <property type="taxonomic scope" value="Eukaryota"/>
</dbReference>
<dbReference type="GeneTree" id="ENSGT00940000154791"/>
<dbReference type="HOGENOM" id="CLU_000038_0_0_1"/>
<dbReference type="InParanoid" id="Q63164"/>
<dbReference type="OMA" id="HNVAKMV"/>
<dbReference type="PhylomeDB" id="Q63164"/>
<dbReference type="PRO" id="PR:Q63164"/>
<dbReference type="Proteomes" id="UP000002494">
    <property type="component" value="Chromosome 16"/>
</dbReference>
<dbReference type="Bgee" id="ENSRNOG00000026914">
    <property type="expression patterns" value="Expressed in testis and 4 other cell types or tissues"/>
</dbReference>
<dbReference type="ExpressionAtlas" id="Q63164">
    <property type="expression patterns" value="baseline and differential"/>
</dbReference>
<dbReference type="GO" id="GO:0005930">
    <property type="term" value="C:axoneme"/>
    <property type="evidence" value="ECO:0000250"/>
    <property type="project" value="UniProtKB"/>
</dbReference>
<dbReference type="GO" id="GO:0030286">
    <property type="term" value="C:dynein complex"/>
    <property type="evidence" value="ECO:0000318"/>
    <property type="project" value="GO_Central"/>
</dbReference>
<dbReference type="GO" id="GO:0005576">
    <property type="term" value="C:extracellular region"/>
    <property type="evidence" value="ECO:0007669"/>
    <property type="project" value="GOC"/>
</dbReference>
<dbReference type="GO" id="GO:0036156">
    <property type="term" value="C:inner dynein arm"/>
    <property type="evidence" value="ECO:0000266"/>
    <property type="project" value="RGD"/>
</dbReference>
<dbReference type="GO" id="GO:0005874">
    <property type="term" value="C:microtubule"/>
    <property type="evidence" value="ECO:0007669"/>
    <property type="project" value="UniProtKB-KW"/>
</dbReference>
<dbReference type="GO" id="GO:0036126">
    <property type="term" value="C:sperm flagellum"/>
    <property type="evidence" value="ECO:0000266"/>
    <property type="project" value="RGD"/>
</dbReference>
<dbReference type="GO" id="GO:0005524">
    <property type="term" value="F:ATP binding"/>
    <property type="evidence" value="ECO:0007669"/>
    <property type="project" value="UniProtKB-KW"/>
</dbReference>
<dbReference type="GO" id="GO:0045505">
    <property type="term" value="F:dynein intermediate chain binding"/>
    <property type="evidence" value="ECO:0000318"/>
    <property type="project" value="GO_Central"/>
</dbReference>
<dbReference type="GO" id="GO:0051959">
    <property type="term" value="F:dynein light intermediate chain binding"/>
    <property type="evidence" value="ECO:0000318"/>
    <property type="project" value="GO_Central"/>
</dbReference>
<dbReference type="GO" id="GO:0008569">
    <property type="term" value="F:minus-end-directed microtubule motor activity"/>
    <property type="evidence" value="ECO:0000318"/>
    <property type="project" value="GO_Central"/>
</dbReference>
<dbReference type="GO" id="GO:0060294">
    <property type="term" value="P:cilium movement involved in cell motility"/>
    <property type="evidence" value="ECO:0000266"/>
    <property type="project" value="RGD"/>
</dbReference>
<dbReference type="GO" id="GO:0003351">
    <property type="term" value="P:epithelial cilium movement involved in extracellular fluid movement"/>
    <property type="evidence" value="ECO:0000266"/>
    <property type="project" value="RGD"/>
</dbReference>
<dbReference type="GO" id="GO:0030317">
    <property type="term" value="P:flagellated sperm motility"/>
    <property type="evidence" value="ECO:0000250"/>
    <property type="project" value="UniProtKB"/>
</dbReference>
<dbReference type="GO" id="GO:0036159">
    <property type="term" value="P:inner dynein arm assembly"/>
    <property type="evidence" value="ECO:0000266"/>
    <property type="project" value="RGD"/>
</dbReference>
<dbReference type="GO" id="GO:0007288">
    <property type="term" value="P:sperm axoneme assembly"/>
    <property type="evidence" value="ECO:0000250"/>
    <property type="project" value="UniProtKB"/>
</dbReference>
<dbReference type="FunFam" id="1.10.472.130:FF:000006">
    <property type="entry name" value="Dynein axonemal heavy chain 1"/>
    <property type="match status" value="1"/>
</dbReference>
<dbReference type="FunFam" id="1.10.8.1220:FF:000001">
    <property type="entry name" value="Dynein axonemal heavy chain 5"/>
    <property type="match status" value="1"/>
</dbReference>
<dbReference type="FunFam" id="1.10.8.710:FF:000004">
    <property type="entry name" value="Dynein axonemal heavy chain 6"/>
    <property type="match status" value="1"/>
</dbReference>
<dbReference type="FunFam" id="1.20.140.100:FF:000004">
    <property type="entry name" value="Dynein axonemal heavy chain 6"/>
    <property type="match status" value="1"/>
</dbReference>
<dbReference type="FunFam" id="3.40.50.300:FF:002141">
    <property type="entry name" value="Dynein heavy chain"/>
    <property type="match status" value="1"/>
</dbReference>
<dbReference type="FunFam" id="1.10.287.2620:FF:000005">
    <property type="entry name" value="Dynein heavy chain 1, axonemal"/>
    <property type="match status" value="1"/>
</dbReference>
<dbReference type="FunFam" id="3.20.180.20:FF:000003">
    <property type="entry name" value="Dynein heavy chain 12, axonemal"/>
    <property type="match status" value="1"/>
</dbReference>
<dbReference type="FunFam" id="1.20.920.20:FF:000001">
    <property type="entry name" value="dynein heavy chain 2, axonemal"/>
    <property type="match status" value="1"/>
</dbReference>
<dbReference type="FunFam" id="3.40.50.300:FF:000223">
    <property type="entry name" value="Dynein heavy chain 3, axonemal"/>
    <property type="match status" value="1"/>
</dbReference>
<dbReference type="FunFam" id="3.40.50.300:FF:001328">
    <property type="entry name" value="Dynein heavy chain 6, axonemal"/>
    <property type="match status" value="1"/>
</dbReference>
<dbReference type="FunFam" id="3.40.50.300:FF:000063">
    <property type="entry name" value="dynein heavy chain 6, axonemal"/>
    <property type="match status" value="1"/>
</dbReference>
<dbReference type="FunFam" id="1.10.8.720:FF:000001">
    <property type="entry name" value="dynein heavy chain 7, axonemal"/>
    <property type="match status" value="1"/>
</dbReference>
<dbReference type="FunFam" id="1.20.1270.280:FF:000001">
    <property type="entry name" value="dynein heavy chain 7, axonemal"/>
    <property type="match status" value="1"/>
</dbReference>
<dbReference type="FunFam" id="3.10.490.20:FF:000001">
    <property type="entry name" value="dynein heavy chain 7, axonemal"/>
    <property type="match status" value="1"/>
</dbReference>
<dbReference type="FunFam" id="1.20.58.1120:FF:000005">
    <property type="entry name" value="Dynein, axonemal, heavy chain 12"/>
    <property type="match status" value="1"/>
</dbReference>
<dbReference type="FunFam" id="1.20.920.30:FF:000005">
    <property type="entry name" value="Dynein, axonemal, heavy chain 2"/>
    <property type="match status" value="1"/>
</dbReference>
<dbReference type="FunFam" id="3.40.50.300:FF:000362">
    <property type="entry name" value="Dynein, axonemal, heavy chain 6"/>
    <property type="match status" value="1"/>
</dbReference>
<dbReference type="Gene3D" id="1.10.287.2620">
    <property type="match status" value="1"/>
</dbReference>
<dbReference type="Gene3D" id="1.10.472.130">
    <property type="match status" value="1"/>
</dbReference>
<dbReference type="Gene3D" id="1.10.8.1220">
    <property type="match status" value="1"/>
</dbReference>
<dbReference type="Gene3D" id="1.10.8.710">
    <property type="match status" value="1"/>
</dbReference>
<dbReference type="Gene3D" id="1.20.1270.280">
    <property type="match status" value="1"/>
</dbReference>
<dbReference type="Gene3D" id="1.20.58.1120">
    <property type="match status" value="1"/>
</dbReference>
<dbReference type="Gene3D" id="1.20.920.20">
    <property type="match status" value="1"/>
</dbReference>
<dbReference type="Gene3D" id="1.20.920.30">
    <property type="match status" value="1"/>
</dbReference>
<dbReference type="Gene3D" id="3.10.490.20">
    <property type="match status" value="1"/>
</dbReference>
<dbReference type="Gene3D" id="6.10.140.1060">
    <property type="match status" value="1"/>
</dbReference>
<dbReference type="Gene3D" id="1.20.140.100">
    <property type="entry name" value="Dynein heavy chain, N-terminal domain 2"/>
    <property type="match status" value="1"/>
</dbReference>
<dbReference type="Gene3D" id="3.20.180.20">
    <property type="entry name" value="Dynein heavy chain, N-terminal domain 2"/>
    <property type="match status" value="1"/>
</dbReference>
<dbReference type="Gene3D" id="3.40.50.300">
    <property type="entry name" value="P-loop containing nucleotide triphosphate hydrolases"/>
    <property type="match status" value="5"/>
</dbReference>
<dbReference type="Gene3D" id="1.10.8.720">
    <property type="entry name" value="Region D6 of dynein motor"/>
    <property type="match status" value="1"/>
</dbReference>
<dbReference type="InterPro" id="IPR035699">
    <property type="entry name" value="AAA_6"/>
</dbReference>
<dbReference type="InterPro" id="IPR035706">
    <property type="entry name" value="AAA_9"/>
</dbReference>
<dbReference type="InterPro" id="IPR041658">
    <property type="entry name" value="AAA_lid_11"/>
</dbReference>
<dbReference type="InterPro" id="IPR042219">
    <property type="entry name" value="AAA_lid_11_sf"/>
</dbReference>
<dbReference type="InterPro" id="IPR026983">
    <property type="entry name" value="DHC"/>
</dbReference>
<dbReference type="InterPro" id="IPR041589">
    <property type="entry name" value="DNAH3_AAA_lid_1"/>
</dbReference>
<dbReference type="InterPro" id="IPR042222">
    <property type="entry name" value="Dynein_2_N"/>
</dbReference>
<dbReference type="InterPro" id="IPR043157">
    <property type="entry name" value="Dynein_AAA1S"/>
</dbReference>
<dbReference type="InterPro" id="IPR041466">
    <property type="entry name" value="Dynein_AAA5_ext"/>
</dbReference>
<dbReference type="InterPro" id="IPR041228">
    <property type="entry name" value="Dynein_C"/>
</dbReference>
<dbReference type="InterPro" id="IPR043160">
    <property type="entry name" value="Dynein_C_barrel"/>
</dbReference>
<dbReference type="InterPro" id="IPR024743">
    <property type="entry name" value="Dynein_HC_stalk"/>
</dbReference>
<dbReference type="InterPro" id="IPR024317">
    <property type="entry name" value="Dynein_heavy_chain_D4_dom"/>
</dbReference>
<dbReference type="InterPro" id="IPR004273">
    <property type="entry name" value="Dynein_heavy_D6_P-loop"/>
</dbReference>
<dbReference type="InterPro" id="IPR013602">
    <property type="entry name" value="Dynein_heavy_linker"/>
</dbReference>
<dbReference type="InterPro" id="IPR042228">
    <property type="entry name" value="Dynein_linker_3"/>
</dbReference>
<dbReference type="InterPro" id="IPR027417">
    <property type="entry name" value="P-loop_NTPase"/>
</dbReference>
<dbReference type="PANTHER" id="PTHR22878:SF73">
    <property type="entry name" value="DYNEIN AXONEMAL HEAVY CHAIN 1"/>
    <property type="match status" value="1"/>
</dbReference>
<dbReference type="PANTHER" id="PTHR22878">
    <property type="entry name" value="DYNEIN HEAVY CHAIN 6, AXONEMAL-LIKE-RELATED"/>
    <property type="match status" value="1"/>
</dbReference>
<dbReference type="Pfam" id="PF12774">
    <property type="entry name" value="AAA_6"/>
    <property type="match status" value="2"/>
</dbReference>
<dbReference type="Pfam" id="PF12775">
    <property type="entry name" value="AAA_7"/>
    <property type="match status" value="1"/>
</dbReference>
<dbReference type="Pfam" id="PF12780">
    <property type="entry name" value="AAA_8"/>
    <property type="match status" value="1"/>
</dbReference>
<dbReference type="Pfam" id="PF12781">
    <property type="entry name" value="AAA_9"/>
    <property type="match status" value="1"/>
</dbReference>
<dbReference type="Pfam" id="PF17857">
    <property type="entry name" value="AAA_lid_1"/>
    <property type="match status" value="1"/>
</dbReference>
<dbReference type="Pfam" id="PF18198">
    <property type="entry name" value="AAA_lid_11"/>
    <property type="match status" value="1"/>
</dbReference>
<dbReference type="Pfam" id="PF08393">
    <property type="entry name" value="DHC_N2"/>
    <property type="match status" value="1"/>
</dbReference>
<dbReference type="Pfam" id="PF17852">
    <property type="entry name" value="Dynein_AAA_lid"/>
    <property type="match status" value="1"/>
</dbReference>
<dbReference type="Pfam" id="PF18199">
    <property type="entry name" value="Dynein_C"/>
    <property type="match status" value="1"/>
</dbReference>
<dbReference type="Pfam" id="PF03028">
    <property type="entry name" value="Dynein_heavy"/>
    <property type="match status" value="1"/>
</dbReference>
<dbReference type="Pfam" id="PF12777">
    <property type="entry name" value="MT"/>
    <property type="match status" value="1"/>
</dbReference>
<dbReference type="SUPFAM" id="SSF52540">
    <property type="entry name" value="P-loop containing nucleoside triphosphate hydrolases"/>
    <property type="match status" value="4"/>
</dbReference>
<evidence type="ECO:0000250" key="1"/>
<evidence type="ECO:0000250" key="2">
    <source>
        <dbReference type="UniProtKB" id="E9Q8T7"/>
    </source>
</evidence>
<evidence type="ECO:0000250" key="3">
    <source>
        <dbReference type="UniProtKB" id="Q9P2D7"/>
    </source>
</evidence>
<evidence type="ECO:0000255" key="4"/>
<evidence type="ECO:0000256" key="5">
    <source>
        <dbReference type="SAM" id="MobiDB-lite"/>
    </source>
</evidence>
<evidence type="ECO:0000269" key="6">
    <source>
    </source>
</evidence>
<evidence type="ECO:0000303" key="7">
    <source>
    </source>
</evidence>
<evidence type="ECO:0000305" key="8"/>
<evidence type="ECO:0000312" key="9">
    <source>
        <dbReference type="RGD" id="621795"/>
    </source>
</evidence>
<name>DYH1_RAT</name>
<organism>
    <name type="scientific">Rattus norvegicus</name>
    <name type="common">Rat</name>
    <dbReference type="NCBI Taxonomy" id="10116"/>
    <lineage>
        <taxon>Eukaryota</taxon>
        <taxon>Metazoa</taxon>
        <taxon>Chordata</taxon>
        <taxon>Craniata</taxon>
        <taxon>Vertebrata</taxon>
        <taxon>Euteleostomi</taxon>
        <taxon>Mammalia</taxon>
        <taxon>Eutheria</taxon>
        <taxon>Euarchontoglires</taxon>
        <taxon>Glires</taxon>
        <taxon>Rodentia</taxon>
        <taxon>Myomorpha</taxon>
        <taxon>Muroidea</taxon>
        <taxon>Muridae</taxon>
        <taxon>Murinae</taxon>
        <taxon>Rattus</taxon>
    </lineage>
</organism>
<feature type="chain" id="PRO_0000318937" description="Dynein axonemal heavy chain 1">
    <location>
        <begin position="1"/>
        <end position="4516"/>
    </location>
</feature>
<feature type="region of interest" description="Stem" evidence="1">
    <location>
        <begin position="1"/>
        <end position="1748"/>
    </location>
</feature>
<feature type="region of interest" description="Disordered" evidence="5">
    <location>
        <begin position="78"/>
        <end position="160"/>
    </location>
</feature>
<feature type="region of interest" description="AAA 1" evidence="1">
    <location>
        <begin position="1749"/>
        <end position="1956"/>
    </location>
</feature>
<feature type="region of interest" description="AAA 2" evidence="1">
    <location>
        <begin position="2016"/>
        <end position="2249"/>
    </location>
</feature>
<feature type="region of interest" description="AAA 3" evidence="1">
    <location>
        <begin position="2422"/>
        <end position="2682"/>
    </location>
</feature>
<feature type="region of interest" description="AAA 4" evidence="1">
    <location>
        <begin position="2780"/>
        <end position="2972"/>
    </location>
</feature>
<feature type="region of interest" description="Stalk" evidence="1">
    <location>
        <begin position="2987"/>
        <end position="3285"/>
    </location>
</feature>
<feature type="region of interest" description="AAA 5" evidence="1">
    <location>
        <begin position="3388"/>
        <end position="3618"/>
    </location>
</feature>
<feature type="region of interest" description="AAA 6" evidence="1">
    <location>
        <begin position="3831"/>
        <end position="4050"/>
    </location>
</feature>
<feature type="coiled-coil region" evidence="4">
    <location>
        <begin position="3293"/>
        <end position="3394"/>
    </location>
</feature>
<feature type="short sequence motif" description="GPAGTGKT motif">
    <location>
        <begin position="1787"/>
        <end position="1794"/>
    </location>
</feature>
<feature type="short sequence motif" description="CFDEFNR motif" evidence="1">
    <location>
        <begin position="1837"/>
        <end position="1843"/>
    </location>
</feature>
<feature type="compositionally biased region" description="Basic and acidic residues" evidence="5">
    <location>
        <begin position="83"/>
        <end position="97"/>
    </location>
</feature>
<feature type="compositionally biased region" description="Basic and acidic residues" evidence="5">
    <location>
        <begin position="113"/>
        <end position="129"/>
    </location>
</feature>
<feature type="binding site" evidence="4">
    <location>
        <begin position="1787"/>
        <end position="1794"/>
    </location>
    <ligand>
        <name>ATP</name>
        <dbReference type="ChEBI" id="CHEBI:30616"/>
    </ligand>
</feature>
<feature type="binding site" evidence="4">
    <location>
        <begin position="2054"/>
        <end position="2061"/>
    </location>
    <ligand>
        <name>ATP</name>
        <dbReference type="ChEBI" id="CHEBI:30616"/>
    </ligand>
</feature>
<feature type="binding site" evidence="4">
    <location>
        <begin position="2460"/>
        <end position="2467"/>
    </location>
    <ligand>
        <name>ATP</name>
        <dbReference type="ChEBI" id="CHEBI:30616"/>
    </ligand>
</feature>
<feature type="binding site" evidence="4">
    <location>
        <begin position="2819"/>
        <end position="2826"/>
    </location>
    <ligand>
        <name>ATP</name>
        <dbReference type="ChEBI" id="CHEBI:30616"/>
    </ligand>
</feature>
<feature type="splice variant" id="VSP_031309" description="In isoform 2." evidence="7">
    <original>SREYIKSLGGAVMCLPFLCVLYVQ</original>
    <variation>VERFMFEGVEIPLVPSCAVFITMNPGYAGRTELPDNLK</variation>
    <location>
        <begin position="1867"/>
        <end position="1890"/>
    </location>
</feature>
<comment type="function">
    <text evidence="3">Force generating protein of cilia required for sperm flagellum motility. Produces force towards the minus ends of microtubules. Dynein has ATPase activity; the force-producing power stroke is thought to occur on release of ADP. Required in spermatozoa for the formation of the inner dynein arms and biogenesis of the axoneme (By similarity).</text>
</comment>
<comment type="subunit">
    <text>Consists of at least two heavy chains and a number of intermediate and light chains.</text>
</comment>
<comment type="subcellular location">
    <subcellularLocation>
        <location evidence="3">Cytoplasm</location>
        <location evidence="3">Cytoskeleton</location>
        <location evidence="3">Cilium axoneme</location>
    </subcellularLocation>
    <subcellularLocation>
        <location evidence="2">Cell projection</location>
        <location evidence="2">Cilium</location>
        <location evidence="2">Flagellum</location>
    </subcellularLocation>
</comment>
<comment type="alternative products">
    <event type="alternative splicing"/>
    <isoform>
        <id>Q63164-1</id>
        <name>1</name>
        <sequence type="displayed"/>
    </isoform>
    <isoform>
        <id>Q63164-2</id>
        <name>2</name>
        <sequence type="described" ref="VSP_031309"/>
    </isoform>
</comment>
<comment type="tissue specificity">
    <text evidence="6">Expressed in brain.</text>
</comment>
<comment type="domain">
    <text evidence="1">Dynein heavy chains probably consist of an N-terminal stem (which binds cargo and interacts with other dynein components), and the head or motor domain. The motor contains six tandemly-linked AAA domains in the head, which form a ring. A stalk-like structure (formed by two of the coiled coil domains) protrudes between AAA 4 and AAA 5 and terminates in a microtubule-binding site. A seventh domain may also contribute to this ring; it is not clear whether the N-terminus or the C-terminus forms this extra domain. There are four well-conserved and two non-conserved ATPase sites, one per AAA domain. Probably only one of these (within AAA 1) actually hydrolyzes ATP, the others may serve a regulatory function (By similarity).</text>
</comment>
<comment type="similarity">
    <text evidence="8">Belongs to the dynein heavy chain family.</text>
</comment>
<protein>
    <recommendedName>
        <fullName evidence="8">Dynein axonemal heavy chain 1</fullName>
    </recommendedName>
    <alternativeName>
        <fullName>Axonemal beta dynein heavy chain 1</fullName>
    </alternativeName>
    <alternativeName>
        <fullName>Ciliary dynein heavy chain 1</fullName>
    </alternativeName>
</protein>
<keyword id="KW-0025">Alternative splicing</keyword>
<keyword id="KW-0067">ATP-binding</keyword>
<keyword id="KW-0966">Cell projection</keyword>
<keyword id="KW-0969">Cilium</keyword>
<keyword id="KW-0175">Coiled coil</keyword>
<keyword id="KW-0963">Cytoplasm</keyword>
<keyword id="KW-0206">Cytoskeleton</keyword>
<keyword id="KW-0243">Dynein</keyword>
<keyword id="KW-0282">Flagellum</keyword>
<keyword id="KW-0493">Microtubule</keyword>
<keyword id="KW-0505">Motor protein</keyword>
<keyword id="KW-0547">Nucleotide-binding</keyword>
<keyword id="KW-1185">Reference proteome</keyword>
<sequence length="4516" mass="515021">MVTLSISDTLHTPAFVENRHLAITGMPTRKANNGFPSPDDNNVWGQFWKDLQTPLLVVVYVHGAQCQLLLPIENRRVSSGSDKSLKNGMEECDKEEASTSSQGPGYCPANVPENHDLEKMLKESSRNPEKTSPNPELKTPPLPLSDLGQPRKSPLAGTDKKYPIMKQRGFYSDILSPGTLDQLGDVCCGPYLSQNLIRQADLDKFTPKGQCHEHWAAESFVIPEDFQERVEQQSIGTTTRLLTQTDFPLQSYEPKVQVPFQVLPGRCPRKIEIERRKQQYLRLDIEQLLANEGIDSNKLMPRHPDLQQPQTIEQGRDPLFPIYLPLKVFDNEEFDCRTPTEWLNMGLEPDAQYRKPVPGKALLPTDDALGHVHRAGCKQVSFSKCINTGISLPEAGKKQSVSFTLDSNDRNNLTKLSPVLQCLAIKPWEQGHVKCTEFQLPRFTGALALSRNTRAKRGSQEASTRDHLDFEDPKSQELDYRWCEVGVLDYDEEKKLYLVQKTDKRGLVRDEMGMPIVNGGVTPEGRPPLLDTQYWVPRIQLLFCAEDPRVFTQRVVQANALRKNTEALLLYNLYVDCMPTEGQRVINEQSLSKIKQWALSTPRMRKGPSVLEHLSSLAREVNLDYERSMNKINFDQIVSSKPETFSFVTLPEKEEEKVPNQGLVSVPEYPFREQKEDFTFVSLLTRSEVITALSKVRAECNKVTSMSLFHSNLSKYSRLEEFEQIQSQTFSQVQMFLKDSWISTLKVAMRSSLRDMSKGWYNLYETNWEVYLMSKLRKLMELIKYMLQDTLRFLVQDSLGSFAQFIGDACCSVLECIDDMDWGEDLINSPYKPRKNPLFIVDLVLDNTGVHYSTPLEQFEVILLNLFDKGILATHAVPQLEKLVMEDIFISGDPLLESVGLHEPLVEELRANITNAMHKAMIPLQAYAKEYRKTYQTQCPSAEEVREVVITHLKEKEILDNSLPSSIIIGPFYINVDNVKQSLSKKRKALATSMLDILAKNLHNEVDSICEEFRSISRKIYEKPNSIEELAELRDWMKGIPEKLVILEVRQALALAARSLVEPEVGPALEIPFNNPLPSMTRHFLLMQERIVKVMSDYEVMDEFFYNLTTDDFNDKWAANNWPTKILGQIDMVRQQHVEDEEKFRKIQLMDQNNFQEKLEGLQLVVAGFSTHVEIARAHEIANEVRRVKKQLKDCQQLAMLYNNRERIFGLPITNYDKLSRMVKEFQPYLDLWTTASDWLRWSESWMNDPLSAIDAEQLEKNVIESFKTMHKCVKQFKDIPACQDVALDIRARIDEFKPYIPLIQGLRNPGMRNRHWEVLSNEININVRPKANLTFARCLEMNLQDYIESISKVAEVAGKEYAIEQALDKMEKEWASILFNVLPYKETDTYILKSPDEASQLLDDHIVMTQSMSFSPYKKPFEQRINSWETKLKLTQEVLEEWLNCQRSWLYLEPIFSSEDITRQLPVESKRYQTMERIWRKIMKNAYENREVINVCSDQRLLDSLRDCNKLLDLVQKGLSEYLETKRTAFPRFYFLSDDELLEILSQTKDPTAVQPHLRKCFENIARLLFQEDLEITHMYSAEGEEVKLSFSIYPSSNVEDWLLEVERSMKASVHDIIEMAIKAYPTMLRTEWVLSWPGQVTIAGCQTYWTLEVAQALEASSISSSLFPQLSKQLSDLVALVRGKLSRMQRMVLSALIVIEVHAKDVVSKLIDENVVSVHDFEWISQLRYYWTNNDLYIRAVNAEFIYGYEYLGNSGRLVITPLTDRCYLTLTGALHLKFGGAPAGPAGTGKTETTKDLGKALAIQTVVFNCSDQLDFMAMGKFFKGLASAGAWACFDEFNRIDIEVLSVVAQQITTIQKAQQQRSREYIKSLGGAVMCLPFLCVLYVQALFRPVAMMVPDYAMIAEISLYSFGFNEANVLAKKITTTFKLSSEQLSSQDHYDFGMRAVKTVISAAGNLKRENPTMNEELICLRAIRDVNVPKFLQEDLKLFSGIVSDLFPTTKEEETDYGILDQAIRKACEKNNLKDVEGFLIKCIQLYETTVVRHGLMLVGPTGSGKSNCYRILAAAMTSLKGKPSISGGVYEAVNYYVLNPKSITMGQLYGEFDLLTHEWTDGIFPSLIRAGAIASDTNKKWYMFDGPVDAVWIENMNTVLDDNKKLCLSSGEIIKLTEAMTMMFEVQDLAVASPATVSRCGMVYLEPSILGLMPFVECWLKHLPSIIKPYEEQFKTLFVKFLESSIAFVRTTVKEVVASTNSNLTMSLLKLLDCFFKPFLPREGLKKIPSEKLSHIPELIEPWFIFSLVWSVGATGDHSSRLNFSQWLKIKMVFEQIKLAFPEEGLVYDYRLDDAGISSTEDDDEDDEESKQVATALPAQEGGMVKPPGLWDLPPRDSGHLEKATLTASRSEAVAWVKWMDYSVPFTMMPDTNYCNIIVPTMDTMQMSYLLGMLITNHKPVLCIGPTGTGKTLTVSNKLLKNLPLEYISHFLTFSARTSANQTQDLIDSKLDKRRKGVFGPPLGRNFIFFIDDLNMPALETYGAQPPIELLRQWMDHGGWYDRKIIGAFKNLVDINFVCAMGPPGGGRNAITPRLTRHFNYLSFIEMDEVSKKRIFSIILGCWMDGLLGEKSYREPVPGAPNIVHMTEPLVNATISIYAIITSQLLPTPAKSHYTFNLRDLSKVFQGILMAEPAKVEDKVQLLRLWYHENCRVFRDRLVNEEDRGWFDGLLEMKMEDLGVAFNKVCPFQPILYGDFMSPGSDVKSYELITSENKMMQVIEEYMEDYNQINTAKLKLVLFVDAMSHICRISRTLRQALGNALLLGVGGSGRSSLTRLASHMAEYECFQVELSKNYGMSEWREDVKKILLKAGMQNLPITFLFSDTQIKNESFLEDINNILNSGDIPNLYSADEQDQIVNTMRPYIQEQGLQPTKANLMAAYTGRVRNNIHMVLCMSPIGEVFRARLRQFPSLVNCCTIDWFNEWPAEALQSVATRFLHEIPELECSSEVIEGLIHVCVYIHQSVAKKCVEYLAELARHNYVTPKSYLELLNIFSILIGQKKMELKTAKHRMKSGLDKLLRTSEDVAKMQEELEIMRPLLEEAAKDTLLTMDQIKVDTAIAEETRKSVQAEEIKANEKASKAQAIADDAQKDLDEALPALDAALASLRNLNKNDVTEVRAMQRPPPGVKLVIEAVCIMKGIKPKKVPGEKPGSKVDDYWEPGKGLLQDPGRFLESLFKFDKDNIGEAVIKAIQPYIDNEEFQPAAIAKVSKACTSICQWVRAMHKYHFVAKAVEPKRQALREAQDDLEVTQRILEEAKHHLREVEDGISTLQAKYRECVTKKEELEMKCEQCEQRLGRADKSQSPGQPPGAHPTRLLLQLINGLADEKVRWQDTVENLENMLDNIFGDVLVAAGFVAYLGPFTGQYRAALYEYWVNQLTVYGVPHTSKPTLISTLGNPVKIRSWQIAGLPNDTLSVENGVINQFSQRWTHFIDPQGQANKWIKNMEKESGLDVFKLSDRDFLRSMENAIRFGKPCLLENVGEELDPALEPVLLKQTYKQQGNTVLKLGDTVIPYHEDFRMYITTKLPNPHYSPEVSTKLTLINFTLSPSGLEDQLLGQVVAEERPDLEEAKNQLIISNAKMRQELKDIEDQILYRLSSSEGNPVDDVELIKVLEASKMKAAEIQAKVRIAEQTEKDIDLTRMEYIPVAVRTQILFFCVSDLANVDPMYQYSLEWFLNIFLSGIANSERADNLKKRIVNINRYLTFSLYSNVCRSLFEKHKLMFAFLLCVRIMMNEGKINQGEWRYLLSGGSIQTMSENPAPHWLSDRAWRDILALSNLPAFSTFSTDFVQHLPKFQAIFDSAEPHREPLPGIWNTYLDEFQKLLILRCLRGDKVTNAMQDFVANHLEPRFIEPQTANLSAVFKESNSTTPLIFVLSPGTDPAADLYKFAEEMKFSKKLSAISLGQGQGPRAEAMMRNSIERGKWVFFQNCHLAPSWMPALERLIEHINPDKVHRDFRLWLTSLPSNKFPVSILQNGSKMTIEPPRGVKANLLKSYNSLSDDFLHSCQKVVEFKSLLLSLCLFHGNALERRKFGPLGFNIPYEFTDGDLRICISQLKMFLDEYEDIPYKVLKYTAGEINYGGRVTDDWDRRCVMNILEDFYNPAVLSPEHRYSKSGIYHQIPPTYDLNGYLSYIKSLPLNDMPEIFGLHDNANITFAQNETFALFGAILQLQPKSSSMGGQSREELVEDVAEDILVQVPKPVDLEEVVNKYPVLYEESMNTVLVQEVIRYNKLLMVITQTLSDMLKAIKGLVVMSLELELMSTSLYNNAVPELWKSKAYPSLKPLASWIMDLLQRLNFLHSWIKNGIPSVFWISGFFFPQAFLTGTLQNFARKFVISIDTITFDFKVLSYASSEIAERPSTGCYIYGLFLEGARWDPFDFQLAESRPKELYTEMAVIWLLPVANRKVQNQDFYLCPIYKTLTRAGTLSTTGHSTNYVIAVEIPSNQPQRHWIKRGVALICALDY</sequence>
<gene>
    <name evidence="9" type="primary">Dnah1</name>
    <name type="synonym">Dlp1</name>
</gene>
<proteinExistence type="evidence at transcript level"/>
<reference key="1">
    <citation type="journal article" date="2004" name="Nature">
        <title>Genome sequence of the Brown Norway rat yields insights into mammalian evolution.</title>
        <authorList>
            <person name="Gibbs R.A."/>
            <person name="Weinstock G.M."/>
            <person name="Metzker M.L."/>
            <person name="Muzny D.M."/>
            <person name="Sodergren E.J."/>
            <person name="Scherer S."/>
            <person name="Scott G."/>
            <person name="Steffen D."/>
            <person name="Worley K.C."/>
            <person name="Burch P.E."/>
            <person name="Okwuonu G."/>
            <person name="Hines S."/>
            <person name="Lewis L."/>
            <person name="Deramo C."/>
            <person name="Delgado O."/>
            <person name="Dugan-Rocha S."/>
            <person name="Miner G."/>
            <person name="Morgan M."/>
            <person name="Hawes A."/>
            <person name="Gill R."/>
            <person name="Holt R.A."/>
            <person name="Adams M.D."/>
            <person name="Amanatides P.G."/>
            <person name="Baden-Tillson H."/>
            <person name="Barnstead M."/>
            <person name="Chin S."/>
            <person name="Evans C.A."/>
            <person name="Ferriera S."/>
            <person name="Fosler C."/>
            <person name="Glodek A."/>
            <person name="Gu Z."/>
            <person name="Jennings D."/>
            <person name="Kraft C.L."/>
            <person name="Nguyen T."/>
            <person name="Pfannkoch C.M."/>
            <person name="Sitter C."/>
            <person name="Sutton G.G."/>
            <person name="Venter J.C."/>
            <person name="Woodage T."/>
            <person name="Smith D."/>
            <person name="Lee H.-M."/>
            <person name="Gustafson E."/>
            <person name="Cahill P."/>
            <person name="Kana A."/>
            <person name="Doucette-Stamm L."/>
            <person name="Weinstock K."/>
            <person name="Fechtel K."/>
            <person name="Weiss R.B."/>
            <person name="Dunn D.M."/>
            <person name="Green E.D."/>
            <person name="Blakesley R.W."/>
            <person name="Bouffard G.G."/>
            <person name="De Jong P.J."/>
            <person name="Osoegawa K."/>
            <person name="Zhu B."/>
            <person name="Marra M."/>
            <person name="Schein J."/>
            <person name="Bosdet I."/>
            <person name="Fjell C."/>
            <person name="Jones S."/>
            <person name="Krzywinski M."/>
            <person name="Mathewson C."/>
            <person name="Siddiqui A."/>
            <person name="Wye N."/>
            <person name="McPherson J."/>
            <person name="Zhao S."/>
            <person name="Fraser C.M."/>
            <person name="Shetty J."/>
            <person name="Shatsman S."/>
            <person name="Geer K."/>
            <person name="Chen Y."/>
            <person name="Abramzon S."/>
            <person name="Nierman W.C."/>
            <person name="Havlak P.H."/>
            <person name="Chen R."/>
            <person name="Durbin K.J."/>
            <person name="Egan A."/>
            <person name="Ren Y."/>
            <person name="Song X.-Z."/>
            <person name="Li B."/>
            <person name="Liu Y."/>
            <person name="Qin X."/>
            <person name="Cawley S."/>
            <person name="Cooney A.J."/>
            <person name="D'Souza L.M."/>
            <person name="Martin K."/>
            <person name="Wu J.Q."/>
            <person name="Gonzalez-Garay M.L."/>
            <person name="Jackson A.R."/>
            <person name="Kalafus K.J."/>
            <person name="McLeod M.P."/>
            <person name="Milosavljevic A."/>
            <person name="Virk D."/>
            <person name="Volkov A."/>
            <person name="Wheeler D.A."/>
            <person name="Zhang Z."/>
            <person name="Bailey J.A."/>
            <person name="Eichler E.E."/>
            <person name="Tuzun E."/>
            <person name="Birney E."/>
            <person name="Mongin E."/>
            <person name="Ureta-Vidal A."/>
            <person name="Woodwark C."/>
            <person name="Zdobnov E."/>
            <person name="Bork P."/>
            <person name="Suyama M."/>
            <person name="Torrents D."/>
            <person name="Alexandersson M."/>
            <person name="Trask B.J."/>
            <person name="Young J.M."/>
            <person name="Huang H."/>
            <person name="Wang H."/>
            <person name="Xing H."/>
            <person name="Daniels S."/>
            <person name="Gietzen D."/>
            <person name="Schmidt J."/>
            <person name="Stevens K."/>
            <person name="Vitt U."/>
            <person name="Wingrove J."/>
            <person name="Camara F."/>
            <person name="Mar Alba M."/>
            <person name="Abril J.F."/>
            <person name="Guigo R."/>
            <person name="Smit A."/>
            <person name="Dubchak I."/>
            <person name="Rubin E.M."/>
            <person name="Couronne O."/>
            <person name="Poliakov A."/>
            <person name="Huebner N."/>
            <person name="Ganten D."/>
            <person name="Goesele C."/>
            <person name="Hummel O."/>
            <person name="Kreitler T."/>
            <person name="Lee Y.-A."/>
            <person name="Monti J."/>
            <person name="Schulz H."/>
            <person name="Zimdahl H."/>
            <person name="Himmelbauer H."/>
            <person name="Lehrach H."/>
            <person name="Jacob H.J."/>
            <person name="Bromberg S."/>
            <person name="Gullings-Handley J."/>
            <person name="Jensen-Seaman M.I."/>
            <person name="Kwitek A.E."/>
            <person name="Lazar J."/>
            <person name="Pasko D."/>
            <person name="Tonellato P.J."/>
            <person name="Twigger S."/>
            <person name="Ponting C.P."/>
            <person name="Duarte J.M."/>
            <person name="Rice S."/>
            <person name="Goodstadt L."/>
            <person name="Beatson S.A."/>
            <person name="Emes R.D."/>
            <person name="Winter E.E."/>
            <person name="Webber C."/>
            <person name="Brandt P."/>
            <person name="Nyakatura G."/>
            <person name="Adetobi M."/>
            <person name="Chiaromonte F."/>
            <person name="Elnitski L."/>
            <person name="Eswara P."/>
            <person name="Hardison R.C."/>
            <person name="Hou M."/>
            <person name="Kolbe D."/>
            <person name="Makova K."/>
            <person name="Miller W."/>
            <person name="Nekrutenko A."/>
            <person name="Riemer C."/>
            <person name="Schwartz S."/>
            <person name="Taylor J."/>
            <person name="Yang S."/>
            <person name="Zhang Y."/>
            <person name="Lindpaintner K."/>
            <person name="Andrews T.D."/>
            <person name="Caccamo M."/>
            <person name="Clamp M."/>
            <person name="Clarke L."/>
            <person name="Curwen V."/>
            <person name="Durbin R.M."/>
            <person name="Eyras E."/>
            <person name="Searle S.M."/>
            <person name="Cooper G.M."/>
            <person name="Batzoglou S."/>
            <person name="Brudno M."/>
            <person name="Sidow A."/>
            <person name="Stone E.A."/>
            <person name="Payseur B.A."/>
            <person name="Bourque G."/>
            <person name="Lopez-Otin C."/>
            <person name="Puente X.S."/>
            <person name="Chakrabarti K."/>
            <person name="Chatterji S."/>
            <person name="Dewey C."/>
            <person name="Pachter L."/>
            <person name="Bray N."/>
            <person name="Yap V.B."/>
            <person name="Caspi A."/>
            <person name="Tesler G."/>
            <person name="Pevzner P.A."/>
            <person name="Haussler D."/>
            <person name="Roskin K.M."/>
            <person name="Baertsch R."/>
            <person name="Clawson H."/>
            <person name="Furey T.S."/>
            <person name="Hinrichs A.S."/>
            <person name="Karolchik D."/>
            <person name="Kent W.J."/>
            <person name="Rosenbloom K.R."/>
            <person name="Trumbower H."/>
            <person name="Weirauch M."/>
            <person name="Cooper D.N."/>
            <person name="Stenson P.D."/>
            <person name="Ma B."/>
            <person name="Brent M."/>
            <person name="Arumugam M."/>
            <person name="Shteynberg D."/>
            <person name="Copley R.R."/>
            <person name="Taylor M.S."/>
            <person name="Riethman H."/>
            <person name="Mudunuri U."/>
            <person name="Peterson J."/>
            <person name="Guyer M."/>
            <person name="Felsenfeld A."/>
            <person name="Old S."/>
            <person name="Mockrin S."/>
            <person name="Collins F.S."/>
        </authorList>
    </citation>
    <scope>NUCLEOTIDE SEQUENCE [LARGE SCALE GENOMIC DNA]</scope>
    <source>
        <strain>Brown Norway</strain>
    </source>
</reference>
<reference key="2">
    <citation type="journal article" date="1995" name="J. Cell Sci.">
        <title>Identification and molecular evolution of new dynein-like protein sequences in rat brain.</title>
        <authorList>
            <person name="Tanaka Y."/>
            <person name="Zhang Z."/>
            <person name="Hirokawa N."/>
        </authorList>
    </citation>
    <scope>NUCLEOTIDE SEQUENCE [MRNA] OF 1756-1941 (ISOFORM 2)</scope>
    <scope>TISSUE SPECIFICITY</scope>
    <source>
        <strain>Wistar</strain>
        <tissue>Brain</tissue>
    </source>
</reference>
<accession>Q63164</accession>